<sequence>MGVDGYVSLCSVGGMLLALLASSFISDGGCSVDAPTPSPAIPTGLASKKGSNSSTVDGGPLATVPSATSPNTPRTQRALVVLVLFSAAVVIYFVIRAVRTRIKNKKTRKYGVLDTNLGNMELTPLEQDDDDDDTLFDSNQPRSQLSLACILQTPQFPAHVISIRKGTSQCNALWVM</sequence>
<evidence type="ECO:0000255" key="1"/>
<evidence type="ECO:0000256" key="2">
    <source>
        <dbReference type="SAM" id="MobiDB-lite"/>
    </source>
</evidence>
<evidence type="ECO:0000305" key="3"/>
<reference key="1">
    <citation type="submission" date="2004-09" db="EMBL/GenBank/DDBJ databases">
        <authorList>
            <consortium name="NIH - Xenopus Gene Collection (XGC) project"/>
        </authorList>
    </citation>
    <scope>NUCLEOTIDE SEQUENCE [LARGE SCALE MRNA]</scope>
    <source>
        <tissue>Embryo</tissue>
    </source>
</reference>
<comment type="subcellular location">
    <subcellularLocation>
        <location evidence="3">Membrane</location>
        <topology evidence="3">Single-pass type I membrane protein</topology>
    </subcellularLocation>
</comment>
<comment type="similarity">
    <text evidence="3">Belongs to the FAM174 family.</text>
</comment>
<proteinExistence type="evidence at transcript level"/>
<organism>
    <name type="scientific">Xenopus laevis</name>
    <name type="common">African clawed frog</name>
    <dbReference type="NCBI Taxonomy" id="8355"/>
    <lineage>
        <taxon>Eukaryota</taxon>
        <taxon>Metazoa</taxon>
        <taxon>Chordata</taxon>
        <taxon>Craniata</taxon>
        <taxon>Vertebrata</taxon>
        <taxon>Euteleostomi</taxon>
        <taxon>Amphibia</taxon>
        <taxon>Batrachia</taxon>
        <taxon>Anura</taxon>
        <taxon>Pipoidea</taxon>
        <taxon>Pipidae</taxon>
        <taxon>Xenopodinae</taxon>
        <taxon>Xenopus</taxon>
        <taxon>Xenopus</taxon>
    </lineage>
</organism>
<protein>
    <recommendedName>
        <fullName>Membrane protein FAM174</fullName>
    </recommendedName>
    <alternativeName>
        <fullName>Transmembrane protein 157</fullName>
    </alternativeName>
</protein>
<gene>
    <name type="primary">fam174</name>
</gene>
<dbReference type="EMBL" id="BC082715">
    <property type="protein sequence ID" value="AAH82715.1"/>
    <property type="molecule type" value="mRNA"/>
</dbReference>
<dbReference type="RefSeq" id="NP_001088019.1">
    <property type="nucleotide sequence ID" value="NM_001094550.1"/>
</dbReference>
<dbReference type="GlyCosmos" id="Q640B5">
    <property type="glycosylation" value="1 site, No reported glycans"/>
</dbReference>
<dbReference type="DNASU" id="494710"/>
<dbReference type="GeneID" id="494710"/>
<dbReference type="KEGG" id="xla:494710"/>
<dbReference type="AGR" id="Xenbase:XB-GENE-6255337"/>
<dbReference type="CTD" id="494710"/>
<dbReference type="Xenbase" id="XB-GENE-6255337">
    <property type="gene designation" value="fam174a.S"/>
</dbReference>
<dbReference type="OrthoDB" id="5917722at2759"/>
<dbReference type="Proteomes" id="UP000186698">
    <property type="component" value="Chromosome 1S"/>
</dbReference>
<dbReference type="Bgee" id="494710">
    <property type="expression patterns" value="Expressed in internal ear and 19 other cell types or tissues"/>
</dbReference>
<dbReference type="GO" id="GO:0016020">
    <property type="term" value="C:membrane"/>
    <property type="evidence" value="ECO:0007669"/>
    <property type="project" value="UniProtKB-SubCell"/>
</dbReference>
<dbReference type="InterPro" id="IPR009565">
    <property type="entry name" value="FAM174-like"/>
</dbReference>
<dbReference type="PANTHER" id="PTHR28607">
    <property type="entry name" value="EXPRESSED PROTEIN"/>
    <property type="match status" value="1"/>
</dbReference>
<dbReference type="PANTHER" id="PTHR28607:SF1">
    <property type="entry name" value="MEMBRANE PROTEIN FAM174A"/>
    <property type="match status" value="1"/>
</dbReference>
<dbReference type="Pfam" id="PF06679">
    <property type="entry name" value="DUF1180"/>
    <property type="match status" value="1"/>
</dbReference>
<feature type="signal peptide" evidence="1">
    <location>
        <begin position="1"/>
        <end position="31"/>
    </location>
</feature>
<feature type="chain" id="PRO_0000370363" description="Membrane protein FAM174">
    <location>
        <begin position="32"/>
        <end position="176"/>
    </location>
</feature>
<feature type="topological domain" description="Extracellular" evidence="1">
    <location>
        <begin position="32"/>
        <end position="77"/>
    </location>
</feature>
<feature type="transmembrane region" description="Helical" evidence="1">
    <location>
        <begin position="78"/>
        <end position="98"/>
    </location>
</feature>
<feature type="topological domain" description="Cytoplasmic" evidence="1">
    <location>
        <begin position="99"/>
        <end position="176"/>
    </location>
</feature>
<feature type="region of interest" description="Disordered" evidence="2">
    <location>
        <begin position="41"/>
        <end position="71"/>
    </location>
</feature>
<feature type="glycosylation site" description="N-linked (GlcNAc...) asparagine" evidence="1">
    <location>
        <position position="52"/>
    </location>
</feature>
<keyword id="KW-0325">Glycoprotein</keyword>
<keyword id="KW-0472">Membrane</keyword>
<keyword id="KW-1185">Reference proteome</keyword>
<keyword id="KW-0732">Signal</keyword>
<keyword id="KW-0812">Transmembrane</keyword>
<keyword id="KW-1133">Transmembrane helix</keyword>
<accession>Q640B5</accession>
<name>F174_XENLA</name>